<name>LUTA1_BACCZ</name>
<comment type="function">
    <text evidence="1">Is involved in L-lactate degradation and allows cells to grow with lactate as the sole carbon source.</text>
</comment>
<comment type="similarity">
    <text evidence="1">Belongs to the LutA/YkgE family.</text>
</comment>
<protein>
    <recommendedName>
        <fullName evidence="1">Lactate utilization protein A 1</fullName>
    </recommendedName>
</protein>
<reference key="1">
    <citation type="journal article" date="2006" name="J. Bacteriol.">
        <title>Pathogenomic sequence analysis of Bacillus cereus and Bacillus thuringiensis isolates closely related to Bacillus anthracis.</title>
        <authorList>
            <person name="Han C.S."/>
            <person name="Xie G."/>
            <person name="Challacombe J.F."/>
            <person name="Altherr M.R."/>
            <person name="Bhotika S.S."/>
            <person name="Bruce D."/>
            <person name="Campbell C.S."/>
            <person name="Campbell M.L."/>
            <person name="Chen J."/>
            <person name="Chertkov O."/>
            <person name="Cleland C."/>
            <person name="Dimitrijevic M."/>
            <person name="Doggett N.A."/>
            <person name="Fawcett J.J."/>
            <person name="Glavina T."/>
            <person name="Goodwin L.A."/>
            <person name="Hill K.K."/>
            <person name="Hitchcock P."/>
            <person name="Jackson P.J."/>
            <person name="Keim P."/>
            <person name="Kewalramani A.R."/>
            <person name="Longmire J."/>
            <person name="Lucas S."/>
            <person name="Malfatti S."/>
            <person name="McMurry K."/>
            <person name="Meincke L.J."/>
            <person name="Misra M."/>
            <person name="Moseman B.L."/>
            <person name="Mundt M."/>
            <person name="Munk A.C."/>
            <person name="Okinaka R.T."/>
            <person name="Parson-Quintana B."/>
            <person name="Reilly L.P."/>
            <person name="Richardson P."/>
            <person name="Robinson D.L."/>
            <person name="Rubin E."/>
            <person name="Saunders E."/>
            <person name="Tapia R."/>
            <person name="Tesmer J.G."/>
            <person name="Thayer N."/>
            <person name="Thompson L.S."/>
            <person name="Tice H."/>
            <person name="Ticknor L.O."/>
            <person name="Wills P.L."/>
            <person name="Brettin T.S."/>
            <person name="Gilna P."/>
        </authorList>
    </citation>
    <scope>NUCLEOTIDE SEQUENCE [LARGE SCALE GENOMIC DNA]</scope>
    <source>
        <strain>ZK / E33L</strain>
    </source>
</reference>
<sequence>MKVTLFVTCLVDMFETNVGKATVEVLERLGCEIEFPEAQVCCGQPAYNSGHVEAAKEAMKHMIETFEDAEYIVTPSGSCATMFHEYPHVFKDDPKWAKRAQKVADKTYEFTQFIVDVLKVTDVGASLPGIATIHKSCHMTRMLGVTEAPGILLSNVKGLTVRELPNVQNCCGFGGTFSVKMTPISEQMVDEKVDSAMETGADYLIGADCGCLLNIGGRIERLGKEIKVMHIAEVLNSRS</sequence>
<organism>
    <name type="scientific">Bacillus cereus (strain ZK / E33L)</name>
    <dbReference type="NCBI Taxonomy" id="288681"/>
    <lineage>
        <taxon>Bacteria</taxon>
        <taxon>Bacillati</taxon>
        <taxon>Bacillota</taxon>
        <taxon>Bacilli</taxon>
        <taxon>Bacillales</taxon>
        <taxon>Bacillaceae</taxon>
        <taxon>Bacillus</taxon>
        <taxon>Bacillus cereus group</taxon>
    </lineage>
</organism>
<accession>Q63E67</accession>
<evidence type="ECO:0000255" key="1">
    <source>
        <dbReference type="HAMAP-Rule" id="MF_02105"/>
    </source>
</evidence>
<proteinExistence type="inferred from homology"/>
<gene>
    <name evidence="1" type="primary">lutA1</name>
    <name type="ordered locus">BCE33L1196</name>
</gene>
<dbReference type="EMBL" id="CP000001">
    <property type="protein sequence ID" value="AAU19053.1"/>
    <property type="molecule type" value="Genomic_DNA"/>
</dbReference>
<dbReference type="RefSeq" id="WP_000869149.1">
    <property type="nucleotide sequence ID" value="NZ_CP009968.1"/>
</dbReference>
<dbReference type="SMR" id="Q63E67"/>
<dbReference type="KEGG" id="bcz:BCE33L1196"/>
<dbReference type="PATRIC" id="fig|288681.22.peg.4366"/>
<dbReference type="Proteomes" id="UP000002612">
    <property type="component" value="Chromosome"/>
</dbReference>
<dbReference type="GO" id="GO:0005829">
    <property type="term" value="C:cytosol"/>
    <property type="evidence" value="ECO:0007669"/>
    <property type="project" value="TreeGrafter"/>
</dbReference>
<dbReference type="GO" id="GO:0016491">
    <property type="term" value="F:oxidoreductase activity"/>
    <property type="evidence" value="ECO:0007669"/>
    <property type="project" value="UniProtKB-ARBA"/>
</dbReference>
<dbReference type="GO" id="GO:0006089">
    <property type="term" value="P:lactate metabolic process"/>
    <property type="evidence" value="ECO:0007669"/>
    <property type="project" value="UniProtKB-UniRule"/>
</dbReference>
<dbReference type="HAMAP" id="MF_02105">
    <property type="entry name" value="LutA"/>
    <property type="match status" value="1"/>
</dbReference>
<dbReference type="InterPro" id="IPR004017">
    <property type="entry name" value="Cys_rich_dom"/>
</dbReference>
<dbReference type="InterPro" id="IPR022822">
    <property type="entry name" value="LutA"/>
</dbReference>
<dbReference type="PANTHER" id="PTHR30296:SF0">
    <property type="entry name" value="LACTATE UTILIZATION PROTEIN A"/>
    <property type="match status" value="1"/>
</dbReference>
<dbReference type="PANTHER" id="PTHR30296">
    <property type="entry name" value="UNCHARACTERIZED PROTEIN YKGE"/>
    <property type="match status" value="1"/>
</dbReference>
<dbReference type="Pfam" id="PF02754">
    <property type="entry name" value="CCG"/>
    <property type="match status" value="2"/>
</dbReference>
<feature type="chain" id="PRO_0000384038" description="Lactate utilization protein A 1">
    <location>
        <begin position="1"/>
        <end position="239"/>
    </location>
</feature>